<name>WHIA_STRTD</name>
<sequence length="303" mass="34211">MSFTIKVKEEIIAASSKDIAELSALIKMSGSVGLTNQGLTLSISTENAKIARHIYQLIENRYRCNPELRHYNKTNLKKNRVYTVFVAENVNDILSDLQLADSFFGFETGIETSIMEDDDAGRSYLRGAFLATGTVRDPEKGRYQLEIFSVYQDHAEDLASLMKKFMLDAKVLQHKNGFVTYLQKAEDIMDFLIVIGAMTSKEIFEEVKIMRETRNDLNRANNAETANIARTISASMKTINNIIKIMDTVGLEILPVELRQIAQLRIANPDYSIQQIADSIEPPLTKSGVNHRLRKINKIADDL</sequence>
<reference key="1">
    <citation type="journal article" date="2006" name="Proc. Natl. Acad. Sci. U.S.A.">
        <title>Comparative genomics of the lactic acid bacteria.</title>
        <authorList>
            <person name="Makarova K.S."/>
            <person name="Slesarev A."/>
            <person name="Wolf Y.I."/>
            <person name="Sorokin A."/>
            <person name="Mirkin B."/>
            <person name="Koonin E.V."/>
            <person name="Pavlov A."/>
            <person name="Pavlova N."/>
            <person name="Karamychev V."/>
            <person name="Polouchine N."/>
            <person name="Shakhova V."/>
            <person name="Grigoriev I."/>
            <person name="Lou Y."/>
            <person name="Rohksar D."/>
            <person name="Lucas S."/>
            <person name="Huang K."/>
            <person name="Goodstein D.M."/>
            <person name="Hawkins T."/>
            <person name="Plengvidhya V."/>
            <person name="Welker D."/>
            <person name="Hughes J."/>
            <person name="Goh Y."/>
            <person name="Benson A."/>
            <person name="Baldwin K."/>
            <person name="Lee J.-H."/>
            <person name="Diaz-Muniz I."/>
            <person name="Dosti B."/>
            <person name="Smeianov V."/>
            <person name="Wechter W."/>
            <person name="Barabote R."/>
            <person name="Lorca G."/>
            <person name="Altermann E."/>
            <person name="Barrangou R."/>
            <person name="Ganesan B."/>
            <person name="Xie Y."/>
            <person name="Rawsthorne H."/>
            <person name="Tamir D."/>
            <person name="Parker C."/>
            <person name="Breidt F."/>
            <person name="Broadbent J.R."/>
            <person name="Hutkins R."/>
            <person name="O'Sullivan D."/>
            <person name="Steele J."/>
            <person name="Unlu G."/>
            <person name="Saier M.H. Jr."/>
            <person name="Klaenhammer T."/>
            <person name="Richardson P."/>
            <person name="Kozyavkin S."/>
            <person name="Weimer B.C."/>
            <person name="Mills D.A."/>
        </authorList>
    </citation>
    <scope>NUCLEOTIDE SEQUENCE [LARGE SCALE GENOMIC DNA]</scope>
    <source>
        <strain>ATCC BAA-491 / LMD-9</strain>
    </source>
</reference>
<accession>Q03L08</accession>
<proteinExistence type="inferred from homology"/>
<organism>
    <name type="scientific">Streptococcus thermophilus (strain ATCC BAA-491 / LMD-9)</name>
    <dbReference type="NCBI Taxonomy" id="322159"/>
    <lineage>
        <taxon>Bacteria</taxon>
        <taxon>Bacillati</taxon>
        <taxon>Bacillota</taxon>
        <taxon>Bacilli</taxon>
        <taxon>Lactobacillales</taxon>
        <taxon>Streptococcaceae</taxon>
        <taxon>Streptococcus</taxon>
    </lineage>
</organism>
<protein>
    <recommendedName>
        <fullName evidence="1">Probable cell division protein WhiA</fullName>
    </recommendedName>
</protein>
<evidence type="ECO:0000255" key="1">
    <source>
        <dbReference type="HAMAP-Rule" id="MF_01420"/>
    </source>
</evidence>
<comment type="function">
    <text evidence="1">Involved in cell division and chromosome segregation.</text>
</comment>
<comment type="similarity">
    <text evidence="1">Belongs to the WhiA family.</text>
</comment>
<keyword id="KW-0131">Cell cycle</keyword>
<keyword id="KW-0132">Cell division</keyword>
<keyword id="KW-0238">DNA-binding</keyword>
<gene>
    <name evidence="1" type="primary">whiA</name>
    <name type="ordered locus">STER_0877</name>
</gene>
<feature type="chain" id="PRO_0000376597" description="Probable cell division protein WhiA">
    <location>
        <begin position="1"/>
        <end position="303"/>
    </location>
</feature>
<feature type="DNA-binding region" description="H-T-H motif" evidence="1">
    <location>
        <begin position="272"/>
        <end position="303"/>
    </location>
</feature>
<dbReference type="EMBL" id="CP000419">
    <property type="protein sequence ID" value="ABJ66114.1"/>
    <property type="molecule type" value="Genomic_DNA"/>
</dbReference>
<dbReference type="RefSeq" id="WP_002945081.1">
    <property type="nucleotide sequence ID" value="NC_008532.1"/>
</dbReference>
<dbReference type="SMR" id="Q03L08"/>
<dbReference type="GeneID" id="66898719"/>
<dbReference type="KEGG" id="ste:STER_0877"/>
<dbReference type="HOGENOM" id="CLU_053282_0_0_9"/>
<dbReference type="GO" id="GO:0003677">
    <property type="term" value="F:DNA binding"/>
    <property type="evidence" value="ECO:0007669"/>
    <property type="project" value="UniProtKB-UniRule"/>
</dbReference>
<dbReference type="GO" id="GO:0051301">
    <property type="term" value="P:cell division"/>
    <property type="evidence" value="ECO:0007669"/>
    <property type="project" value="UniProtKB-UniRule"/>
</dbReference>
<dbReference type="GO" id="GO:0043937">
    <property type="term" value="P:regulation of sporulation"/>
    <property type="evidence" value="ECO:0007669"/>
    <property type="project" value="InterPro"/>
</dbReference>
<dbReference type="Gene3D" id="3.10.28.10">
    <property type="entry name" value="Homing endonucleases"/>
    <property type="match status" value="1"/>
</dbReference>
<dbReference type="HAMAP" id="MF_01420">
    <property type="entry name" value="HTH_type_WhiA"/>
    <property type="match status" value="1"/>
</dbReference>
<dbReference type="InterPro" id="IPR027434">
    <property type="entry name" value="Homing_endonucl"/>
</dbReference>
<dbReference type="InterPro" id="IPR018478">
    <property type="entry name" value="Sporu_reg_WhiA_N_dom"/>
</dbReference>
<dbReference type="InterPro" id="IPR003802">
    <property type="entry name" value="Sporulation_regulator_WhiA"/>
</dbReference>
<dbReference type="InterPro" id="IPR023054">
    <property type="entry name" value="Sporulation_regulator_WhiA_C"/>
</dbReference>
<dbReference type="InterPro" id="IPR039518">
    <property type="entry name" value="WhiA_LAGLIDADG_dom"/>
</dbReference>
<dbReference type="NCBIfam" id="TIGR00647">
    <property type="entry name" value="DNA_bind_WhiA"/>
    <property type="match status" value="1"/>
</dbReference>
<dbReference type="PANTHER" id="PTHR37307">
    <property type="entry name" value="CELL DIVISION PROTEIN WHIA-RELATED"/>
    <property type="match status" value="1"/>
</dbReference>
<dbReference type="PANTHER" id="PTHR37307:SF1">
    <property type="entry name" value="CELL DIVISION PROTEIN WHIA-RELATED"/>
    <property type="match status" value="1"/>
</dbReference>
<dbReference type="Pfam" id="PF02650">
    <property type="entry name" value="HTH_WhiA"/>
    <property type="match status" value="1"/>
</dbReference>
<dbReference type="Pfam" id="PF14527">
    <property type="entry name" value="LAGLIDADG_WhiA"/>
    <property type="match status" value="1"/>
</dbReference>
<dbReference type="Pfam" id="PF10298">
    <property type="entry name" value="WhiA_N"/>
    <property type="match status" value="1"/>
</dbReference>
<dbReference type="SUPFAM" id="SSF55608">
    <property type="entry name" value="Homing endonucleases"/>
    <property type="match status" value="1"/>
</dbReference>